<protein>
    <recommendedName>
        <fullName evidence="1">D-alanine--D-alanyl carrier protein ligase</fullName>
        <shortName evidence="1">DCL</shortName>
        <ecNumber evidence="1">6.2.1.54</ecNumber>
    </recommendedName>
    <alternativeName>
        <fullName evidence="1">D-alanine--poly(phosphoribitol) ligase subunit 1</fullName>
    </alternativeName>
    <alternativeName>
        <fullName evidence="1">D-alanine-activating enzyme</fullName>
        <shortName evidence="1">DAE</shortName>
    </alternativeName>
</protein>
<organism>
    <name type="scientific">Streptococcus pneumoniae (strain ATCC 700669 / Spain 23F-1)</name>
    <dbReference type="NCBI Taxonomy" id="561276"/>
    <lineage>
        <taxon>Bacteria</taxon>
        <taxon>Bacillati</taxon>
        <taxon>Bacillota</taxon>
        <taxon>Bacilli</taxon>
        <taxon>Lactobacillales</taxon>
        <taxon>Streptococcaceae</taxon>
        <taxon>Streptococcus</taxon>
    </lineage>
</organism>
<comment type="function">
    <text evidence="1">Catalyzes the first step in the D-alanylation of lipoteichoic acid (LTA), the activation of D-alanine and its transfer onto the D-alanyl carrier protein (Dcp) DltC. In an ATP-dependent two-step reaction, forms a high energy D-alanyl-AMP intermediate, followed by transfer of the D-alanyl residue as a thiol ester to the phosphopantheinyl prosthetic group of the Dcp. D-alanylation of LTA plays an important role in modulating the properties of the cell wall in Gram-positive bacteria, influencing the net charge of the cell wall.</text>
</comment>
<comment type="catalytic activity">
    <reaction evidence="1">
        <text>holo-[D-alanyl-carrier protein] + D-alanine + ATP = D-alanyl-[D-alanyl-carrier protein] + AMP + diphosphate</text>
        <dbReference type="Rhea" id="RHEA:55132"/>
        <dbReference type="Rhea" id="RHEA-COMP:14102"/>
        <dbReference type="Rhea" id="RHEA-COMP:14103"/>
        <dbReference type="ChEBI" id="CHEBI:30616"/>
        <dbReference type="ChEBI" id="CHEBI:33019"/>
        <dbReference type="ChEBI" id="CHEBI:57416"/>
        <dbReference type="ChEBI" id="CHEBI:64479"/>
        <dbReference type="ChEBI" id="CHEBI:138620"/>
        <dbReference type="ChEBI" id="CHEBI:456215"/>
        <dbReference type="EC" id="6.2.1.54"/>
    </reaction>
</comment>
<comment type="pathway">
    <text evidence="1">Cell wall biogenesis; lipoteichoic acid biosynthesis.</text>
</comment>
<comment type="subcellular location">
    <subcellularLocation>
        <location evidence="1">Cytoplasm</location>
    </subcellularLocation>
</comment>
<comment type="similarity">
    <text evidence="1">Belongs to the ATP-dependent AMP-binding enzyme family. DltA subfamily.</text>
</comment>
<sequence length="516" mass="57383">MSNKPIADMIETIEHFAQTQPSYPVYNVLGQEHTYGDLKADSDSLAAVIDQLGLPEKSPVVVFGGQEYEMLATFVALTKSGHAYIPIDSHSALERVSAILEVAEPSLIIAISAFPLEQVSTPMINLAQVQEAFAQGNNYEITHPVKGDDNYYIIFTSGTTGKPKGVQISHDNLLSFTNWMITDKEFATPSRPQMLAQPPYSFDLSVMYWAPTLALGGTLFTLPSVITQDFKQLFAAIFSLPIAIWTSTPSFADMAMLSEYFNSEKMPGITHFYFDGEELTVKTAQKLRERFPNARIINAYGPTEATVALSAVAVTDEMLATLKRLPIGYTKADSPTFIIDEEGNKLPNGEQGEIIVSGPAVSKGYMKNPEKTAEAFFEFEGLPAYHTGDVGTMTDEGLLLYGGRMDFQIKFNGYRIELEDVSQNLNKSRFIESAVAVPRYNKDHKVQNLLAYVILKDGVREQFERDIDITKAIKEDLTDIMMSYMMPSKFLYRDSLPLTPNGKIDIKGLINEVNKR</sequence>
<gene>
    <name evidence="1" type="primary">dltA</name>
    <name type="ordered locus">SPN23F22090</name>
</gene>
<accession>B8ZQ14</accession>
<proteinExistence type="inferred from homology"/>
<keyword id="KW-0067">ATP-binding</keyword>
<keyword id="KW-0963">Cytoplasm</keyword>
<keyword id="KW-0436">Ligase</keyword>
<keyword id="KW-0547">Nucleotide-binding</keyword>
<feature type="chain" id="PRO_1000146975" description="D-alanine--D-alanyl carrier protein ligase">
    <location>
        <begin position="1"/>
        <end position="516"/>
    </location>
</feature>
<feature type="binding site" evidence="1">
    <location>
        <begin position="156"/>
        <end position="157"/>
    </location>
    <ligand>
        <name>ATP</name>
        <dbReference type="ChEBI" id="CHEBI:30616"/>
    </ligand>
</feature>
<feature type="binding site" evidence="1">
    <location>
        <position position="203"/>
    </location>
    <ligand>
        <name>D-alanine</name>
        <dbReference type="ChEBI" id="CHEBI:57416"/>
    </ligand>
</feature>
<feature type="binding site" evidence="1">
    <location>
        <begin position="298"/>
        <end position="303"/>
    </location>
    <ligand>
        <name>ATP</name>
        <dbReference type="ChEBI" id="CHEBI:30616"/>
    </ligand>
</feature>
<feature type="binding site" evidence="1">
    <location>
        <position position="307"/>
    </location>
    <ligand>
        <name>D-alanine</name>
        <dbReference type="ChEBI" id="CHEBI:57416"/>
    </ligand>
</feature>
<feature type="binding site" evidence="1">
    <location>
        <position position="389"/>
    </location>
    <ligand>
        <name>ATP</name>
        <dbReference type="ChEBI" id="CHEBI:30616"/>
    </ligand>
</feature>
<feature type="binding site" evidence="1">
    <location>
        <begin position="401"/>
        <end position="404"/>
    </location>
    <ligand>
        <name>ATP</name>
        <dbReference type="ChEBI" id="CHEBI:30616"/>
    </ligand>
</feature>
<feature type="binding site" evidence="1">
    <location>
        <position position="503"/>
    </location>
    <ligand>
        <name>ATP</name>
        <dbReference type="ChEBI" id="CHEBI:30616"/>
    </ligand>
</feature>
<feature type="binding site" evidence="1">
    <location>
        <position position="503"/>
    </location>
    <ligand>
        <name>D-alanine</name>
        <dbReference type="ChEBI" id="CHEBI:57416"/>
    </ligand>
</feature>
<reference key="1">
    <citation type="journal article" date="2009" name="J. Bacteriol.">
        <title>Role of conjugative elements in the evolution of the multidrug-resistant pandemic clone Streptococcus pneumoniae Spain23F ST81.</title>
        <authorList>
            <person name="Croucher N.J."/>
            <person name="Walker D."/>
            <person name="Romero P."/>
            <person name="Lennard N."/>
            <person name="Paterson G.K."/>
            <person name="Bason N.C."/>
            <person name="Mitchell A.M."/>
            <person name="Quail M.A."/>
            <person name="Andrew P.W."/>
            <person name="Parkhill J."/>
            <person name="Bentley S.D."/>
            <person name="Mitchell T.J."/>
        </authorList>
    </citation>
    <scope>NUCLEOTIDE SEQUENCE [LARGE SCALE GENOMIC DNA]</scope>
    <source>
        <strain>ATCC 700669 / Spain 23F-1</strain>
    </source>
</reference>
<name>DLTA_STRPJ</name>
<dbReference type="EC" id="6.2.1.54" evidence="1"/>
<dbReference type="EMBL" id="FM211187">
    <property type="protein sequence ID" value="CAR69941.1"/>
    <property type="molecule type" value="Genomic_DNA"/>
</dbReference>
<dbReference type="RefSeq" id="WP_000066731.1">
    <property type="nucleotide sequence ID" value="NC_011900.1"/>
</dbReference>
<dbReference type="SMR" id="B8ZQ14"/>
<dbReference type="KEGG" id="sne:SPN23F22090"/>
<dbReference type="HOGENOM" id="CLU_000022_2_12_9"/>
<dbReference type="UniPathway" id="UPA00556"/>
<dbReference type="GO" id="GO:0005737">
    <property type="term" value="C:cytoplasm"/>
    <property type="evidence" value="ECO:0007669"/>
    <property type="project" value="UniProtKB-SubCell"/>
</dbReference>
<dbReference type="GO" id="GO:0005524">
    <property type="term" value="F:ATP binding"/>
    <property type="evidence" value="ECO:0007669"/>
    <property type="project" value="UniProtKB-KW"/>
</dbReference>
<dbReference type="GO" id="GO:0047473">
    <property type="term" value="F:D-alanine [D-alanyl carrier protein] ligase activity"/>
    <property type="evidence" value="ECO:0007669"/>
    <property type="project" value="UniProtKB-UniRule"/>
</dbReference>
<dbReference type="GO" id="GO:0070395">
    <property type="term" value="P:lipoteichoic acid biosynthetic process"/>
    <property type="evidence" value="ECO:0007669"/>
    <property type="project" value="UniProtKB-UniRule"/>
</dbReference>
<dbReference type="CDD" id="cd05945">
    <property type="entry name" value="DltA"/>
    <property type="match status" value="1"/>
</dbReference>
<dbReference type="FunFam" id="3.30.300.30:FF:000012">
    <property type="entry name" value="D-alanine--D-alanyl carrier protein ligase"/>
    <property type="match status" value="1"/>
</dbReference>
<dbReference type="Gene3D" id="3.30.300.30">
    <property type="match status" value="1"/>
</dbReference>
<dbReference type="Gene3D" id="3.40.50.12780">
    <property type="entry name" value="N-terminal domain of ligase-like"/>
    <property type="match status" value="1"/>
</dbReference>
<dbReference type="HAMAP" id="MF_00593">
    <property type="entry name" value="DltA"/>
    <property type="match status" value="1"/>
</dbReference>
<dbReference type="InterPro" id="IPR010071">
    <property type="entry name" value="AA_adenyl_dom"/>
</dbReference>
<dbReference type="InterPro" id="IPR025110">
    <property type="entry name" value="AMP-bd_C"/>
</dbReference>
<dbReference type="InterPro" id="IPR045851">
    <property type="entry name" value="AMP-bd_C_sf"/>
</dbReference>
<dbReference type="InterPro" id="IPR020845">
    <property type="entry name" value="AMP-binding_CS"/>
</dbReference>
<dbReference type="InterPro" id="IPR000873">
    <property type="entry name" value="AMP-dep_synth/lig_dom"/>
</dbReference>
<dbReference type="InterPro" id="IPR042099">
    <property type="entry name" value="ANL_N_sf"/>
</dbReference>
<dbReference type="InterPro" id="IPR010072">
    <property type="entry name" value="DltA"/>
</dbReference>
<dbReference type="InterPro" id="IPR044507">
    <property type="entry name" value="DltA-like"/>
</dbReference>
<dbReference type="NCBIfam" id="TIGR01733">
    <property type="entry name" value="AA-adenyl-dom"/>
    <property type="match status" value="1"/>
</dbReference>
<dbReference type="NCBIfam" id="TIGR01734">
    <property type="entry name" value="D-ala-DACP-lig"/>
    <property type="match status" value="1"/>
</dbReference>
<dbReference type="NCBIfam" id="NF003417">
    <property type="entry name" value="PRK04813.1"/>
    <property type="match status" value="1"/>
</dbReference>
<dbReference type="PANTHER" id="PTHR45398">
    <property type="match status" value="1"/>
</dbReference>
<dbReference type="PANTHER" id="PTHR45398:SF1">
    <property type="entry name" value="ENZYME, PUTATIVE (JCVI)-RELATED"/>
    <property type="match status" value="1"/>
</dbReference>
<dbReference type="Pfam" id="PF00501">
    <property type="entry name" value="AMP-binding"/>
    <property type="match status" value="1"/>
</dbReference>
<dbReference type="Pfam" id="PF13193">
    <property type="entry name" value="AMP-binding_C"/>
    <property type="match status" value="1"/>
</dbReference>
<dbReference type="SUPFAM" id="SSF56801">
    <property type="entry name" value="Acetyl-CoA synthetase-like"/>
    <property type="match status" value="1"/>
</dbReference>
<dbReference type="PROSITE" id="PS00455">
    <property type="entry name" value="AMP_BINDING"/>
    <property type="match status" value="1"/>
</dbReference>
<evidence type="ECO:0000255" key="1">
    <source>
        <dbReference type="HAMAP-Rule" id="MF_00593"/>
    </source>
</evidence>